<proteinExistence type="evidence at protein level"/>
<gene>
    <name type="primary">PCI8</name>
    <name type="synonym">CSN11</name>
    <name type="synonym">YIH1</name>
    <name type="ordered locus">YIL071C</name>
</gene>
<sequence length="444" mass="51288">MFHGAKGPLLIERIGHLLSINYGEKEERKRWAMQGISYLQEVQCTSTPYLEILVEESGLRPVSLLNSQLVGKPHFSLLGGFDENIARDIISHNFQNAIFQMESEEVPLTKRYQHLEKITQISLLCKNFKGIEEIEYNVKNIIQGRKNFDMLNSMEKDRISHEVVQDDSFSLLRIQMLLCVSYFLQERYFDCCTKFFTMMTSEPLTLKVLSEHLDCMNFISKEEFIMMVNISVLISIPLDNYDDFIYLSDLKQFFQMTPLLVNCLELLINTNFNKFFKIWHGEINKICMESLFLEPSWSSSAAVIMRCKIYFFYLRISKKLQFSYLSSTLGIDLEDIKEELTKLIISGQLNFEIDGDVIHFEDSSILQSIVNEISRNGTMINEVIDKLKNENTDLKDIIQGNPLMYSGGNNTATIINNESSDDMDIDEVNDRSDISDSEGGLFEC</sequence>
<protein>
    <recommendedName>
        <fullName>Cop9 signalosome complex subunit 11</fullName>
    </recommendedName>
    <alternativeName>
        <fullName>Proteasome-COP9 signalosome-eIF3 domain protein 8</fullName>
    </alternativeName>
</protein>
<name>CSN11_YEAST</name>
<dbReference type="EMBL" id="Z38060">
    <property type="protein sequence ID" value="CAA86152.1"/>
    <property type="molecule type" value="Genomic_DNA"/>
</dbReference>
<dbReference type="EMBL" id="BK006942">
    <property type="protein sequence ID" value="DAA08479.1"/>
    <property type="molecule type" value="Genomic_DNA"/>
</dbReference>
<dbReference type="PIR" id="S48408">
    <property type="entry name" value="S48408"/>
</dbReference>
<dbReference type="RefSeq" id="NP_085069.3">
    <property type="nucleotide sequence ID" value="NM_001179421.3"/>
</dbReference>
<dbReference type="BioGRID" id="34921">
    <property type="interactions" value="93"/>
</dbReference>
<dbReference type="ComplexPortal" id="CPX-1894">
    <property type="entry name" value="COP9 signalosome complex"/>
</dbReference>
<dbReference type="DIP" id="DIP-4213N"/>
<dbReference type="FunCoup" id="P40512">
    <property type="interactions" value="106"/>
</dbReference>
<dbReference type="IntAct" id="P40512">
    <property type="interactions" value="9"/>
</dbReference>
<dbReference type="MINT" id="P40512"/>
<dbReference type="STRING" id="4932.YIL071C"/>
<dbReference type="iPTMnet" id="P40512"/>
<dbReference type="PaxDb" id="4932-YIL071C"/>
<dbReference type="PeptideAtlas" id="P40512"/>
<dbReference type="EnsemblFungi" id="YIL071C_mRNA">
    <property type="protein sequence ID" value="YIL071C"/>
    <property type="gene ID" value="YIL071C"/>
</dbReference>
<dbReference type="GeneID" id="854739"/>
<dbReference type="KEGG" id="sce:YIL071C"/>
<dbReference type="AGR" id="SGD:S000001333"/>
<dbReference type="SGD" id="S000001333">
    <property type="gene designation" value="PCI8"/>
</dbReference>
<dbReference type="VEuPathDB" id="FungiDB:YIL071C"/>
<dbReference type="eggNOG" id="ENOG502RK42">
    <property type="taxonomic scope" value="Eukaryota"/>
</dbReference>
<dbReference type="GeneTree" id="ENSGT00510000046608"/>
<dbReference type="HOGENOM" id="CLU_051217_0_0_1"/>
<dbReference type="InParanoid" id="P40512"/>
<dbReference type="OMA" id="WNTEINE"/>
<dbReference type="OrthoDB" id="4033625at2759"/>
<dbReference type="BioCyc" id="YEAST:G3O-31338-MONOMER"/>
<dbReference type="BioGRID-ORCS" id="854739">
    <property type="hits" value="0 hits in 10 CRISPR screens"/>
</dbReference>
<dbReference type="PRO" id="PR:P40512"/>
<dbReference type="Proteomes" id="UP000002311">
    <property type="component" value="Chromosome IX"/>
</dbReference>
<dbReference type="RNAct" id="P40512">
    <property type="molecule type" value="protein"/>
</dbReference>
<dbReference type="GO" id="GO:0008180">
    <property type="term" value="C:COP9 signalosome"/>
    <property type="evidence" value="ECO:0000314"/>
    <property type="project" value="SGD"/>
</dbReference>
<dbReference type="GO" id="GO:0005737">
    <property type="term" value="C:cytoplasm"/>
    <property type="evidence" value="ECO:0007669"/>
    <property type="project" value="UniProtKB-SubCell"/>
</dbReference>
<dbReference type="GO" id="GO:0005634">
    <property type="term" value="C:nucleus"/>
    <property type="evidence" value="ECO:0000303"/>
    <property type="project" value="ComplexPortal"/>
</dbReference>
<dbReference type="GO" id="GO:0000754">
    <property type="term" value="P:adaptation of signaling pathway by response to pheromone involved in conjugation with cellular fusion"/>
    <property type="evidence" value="ECO:0000303"/>
    <property type="project" value="ComplexPortal"/>
</dbReference>
<dbReference type="GO" id="GO:0000338">
    <property type="term" value="P:protein deneddylation"/>
    <property type="evidence" value="ECO:0000315"/>
    <property type="project" value="SGD"/>
</dbReference>
<dbReference type="GO" id="GO:2000434">
    <property type="term" value="P:regulation of protein neddylation"/>
    <property type="evidence" value="ECO:0000303"/>
    <property type="project" value="ComplexPortal"/>
</dbReference>
<dbReference type="InterPro" id="IPR000717">
    <property type="entry name" value="PCI_dom"/>
</dbReference>
<dbReference type="InterPro" id="IPR019585">
    <property type="entry name" value="Rpn7/CSN1"/>
</dbReference>
<dbReference type="PANTHER" id="PTHR14145">
    <property type="entry name" value="26S PROTESOME SUBUNIT 6"/>
    <property type="match status" value="1"/>
</dbReference>
<dbReference type="PANTHER" id="PTHR14145:SF2">
    <property type="entry name" value="COP9 SIGNALOSOME COMPLEX SUBUNIT 1"/>
    <property type="match status" value="1"/>
</dbReference>
<dbReference type="SMART" id="SM00088">
    <property type="entry name" value="PINT"/>
    <property type="match status" value="1"/>
</dbReference>
<dbReference type="PROSITE" id="PS50250">
    <property type="entry name" value="PCI"/>
    <property type="match status" value="1"/>
</dbReference>
<comment type="function">
    <text evidence="3 5 6">Component of the COP9 signalosome (CSN) complex that acts as an regulator of the ubiquitin (Ubl) conjugation pathway by mediating the deneddylation of the cullin subunit of SCF-type E3 ubiquitin-protein ligase complexes The CSN complex is involved in the regulation of the mating pheromone response. PCI8 may also be involved in transcriptional and translational control.</text>
</comment>
<comment type="subunit">
    <text evidence="3 4">Component of a COP9 signalosome-like (CSN) complex, composed of RRI1/CSN5, CSN9, RRI2/CSN10, PCI8/CSN11, CSN12 and CSI1. Interacts with PRT1 and RPG1, 2 subunits of the core complex of translation initiation factor 3 (eIF3).</text>
</comment>
<comment type="subcellular location">
    <subcellularLocation>
        <location evidence="8">Cytoplasm</location>
    </subcellularLocation>
    <subcellularLocation>
        <location evidence="8">Nucleus</location>
    </subcellularLocation>
</comment>
<comment type="miscellaneous">
    <text evidence="7">Present with 504 molecules/cell in log phase SD medium.</text>
</comment>
<accession>P40512</accession>
<accession>D6VVL3</accession>
<feature type="chain" id="PRO_0000121028" description="Cop9 signalosome complex subunit 11">
    <location>
        <begin position="1"/>
        <end position="444"/>
    </location>
</feature>
<feature type="domain" description="PCI" evidence="1">
    <location>
        <begin position="195"/>
        <end position="367"/>
    </location>
</feature>
<feature type="region of interest" description="Disordered" evidence="2">
    <location>
        <begin position="419"/>
        <end position="439"/>
    </location>
</feature>
<organism>
    <name type="scientific">Saccharomyces cerevisiae (strain ATCC 204508 / S288c)</name>
    <name type="common">Baker's yeast</name>
    <dbReference type="NCBI Taxonomy" id="559292"/>
    <lineage>
        <taxon>Eukaryota</taxon>
        <taxon>Fungi</taxon>
        <taxon>Dikarya</taxon>
        <taxon>Ascomycota</taxon>
        <taxon>Saccharomycotina</taxon>
        <taxon>Saccharomycetes</taxon>
        <taxon>Saccharomycetales</taxon>
        <taxon>Saccharomycetaceae</taxon>
        <taxon>Saccharomyces</taxon>
    </lineage>
</organism>
<evidence type="ECO:0000255" key="1">
    <source>
        <dbReference type="PROSITE-ProRule" id="PRU01185"/>
    </source>
</evidence>
<evidence type="ECO:0000256" key="2">
    <source>
        <dbReference type="SAM" id="MobiDB-lite"/>
    </source>
</evidence>
<evidence type="ECO:0000269" key="3">
    <source>
    </source>
</evidence>
<evidence type="ECO:0000269" key="4">
    <source>
    </source>
</evidence>
<evidence type="ECO:0000269" key="5">
    <source>
    </source>
</evidence>
<evidence type="ECO:0000269" key="6">
    <source>
    </source>
</evidence>
<evidence type="ECO:0000269" key="7">
    <source>
    </source>
</evidence>
<evidence type="ECO:0000305" key="8">
    <source>
    </source>
</evidence>
<keyword id="KW-0963">Cytoplasm</keyword>
<keyword id="KW-0539">Nucleus</keyword>
<keyword id="KW-1185">Reference proteome</keyword>
<keyword id="KW-0736">Signalosome</keyword>
<reference key="1">
    <citation type="journal article" date="1997" name="Nature">
        <title>The nucleotide sequence of Saccharomyces cerevisiae chromosome IX.</title>
        <authorList>
            <person name="Churcher C.M."/>
            <person name="Bowman S."/>
            <person name="Badcock K."/>
            <person name="Bankier A.T."/>
            <person name="Brown D."/>
            <person name="Chillingworth T."/>
            <person name="Connor R."/>
            <person name="Devlin K."/>
            <person name="Gentles S."/>
            <person name="Hamlin N."/>
            <person name="Harris D.E."/>
            <person name="Horsnell T."/>
            <person name="Hunt S."/>
            <person name="Jagels K."/>
            <person name="Jones M."/>
            <person name="Lye G."/>
            <person name="Moule S."/>
            <person name="Odell C."/>
            <person name="Pearson D."/>
            <person name="Rajandream M.A."/>
            <person name="Rice P."/>
            <person name="Rowley N."/>
            <person name="Skelton J."/>
            <person name="Smith V."/>
            <person name="Walsh S.V."/>
            <person name="Whitehead S."/>
            <person name="Barrell B.G."/>
        </authorList>
    </citation>
    <scope>NUCLEOTIDE SEQUENCE [LARGE SCALE GENOMIC DNA]</scope>
    <source>
        <strain>ATCC 204508 / S288c</strain>
    </source>
</reference>
<reference key="2">
    <citation type="journal article" date="2014" name="G3 (Bethesda)">
        <title>The reference genome sequence of Saccharomyces cerevisiae: Then and now.</title>
        <authorList>
            <person name="Engel S.R."/>
            <person name="Dietrich F.S."/>
            <person name="Fisk D.G."/>
            <person name="Binkley G."/>
            <person name="Balakrishnan R."/>
            <person name="Costanzo M.C."/>
            <person name="Dwight S.S."/>
            <person name="Hitz B.C."/>
            <person name="Karra K."/>
            <person name="Nash R.S."/>
            <person name="Weng S."/>
            <person name="Wong E.D."/>
            <person name="Lloyd P."/>
            <person name="Skrzypek M.S."/>
            <person name="Miyasato S.R."/>
            <person name="Simison M."/>
            <person name="Cherry J.M."/>
        </authorList>
    </citation>
    <scope>GENOME REANNOTATION</scope>
    <source>
        <strain>ATCC 204508 / S288c</strain>
    </source>
</reference>
<reference key="3">
    <citation type="journal article" date="1998" name="Protein Sci.">
        <title>Homologues of 26S proteasome subunits are regulators of transcription and translation.</title>
        <authorList>
            <person name="Aravind L."/>
            <person name="Ponting C.P."/>
        </authorList>
    </citation>
    <scope>DOMAIN</scope>
</reference>
<reference key="4">
    <citation type="journal article" date="2001" name="J. Biol. Chem.">
        <title>Saccharomyces cerevisiae protein Pci8p and human protein eIF3e/Int-6 interact with the eIF3 core complex by binding to cognate eIF3b subunits.</title>
        <authorList>
            <person name="Shalev A."/>
            <person name="Valasek L."/>
            <person name="Pise-Masison C.A."/>
            <person name="Radonovich M."/>
            <person name="Phan L."/>
            <person name="Clayton J."/>
            <person name="He H."/>
            <person name="Brady J.N."/>
            <person name="Hinnebusch A.G."/>
            <person name="Asano K."/>
        </authorList>
    </citation>
    <scope>FUNCTION</scope>
    <scope>INTERACTION WITH PRT1 AND RPG1</scope>
</reference>
<reference key="5">
    <citation type="journal article" date="2002" name="BMC Genet.">
        <title>Conservation of the COP9/signalosome in budding yeast.</title>
        <authorList>
            <person name="Wee S."/>
            <person name="Hetfeld B."/>
            <person name="Dubiel W."/>
            <person name="Wolf D.A."/>
        </authorList>
    </citation>
    <scope>FUNCTION OF THE COP9 SIGNALOSOME COMPLEX</scope>
</reference>
<reference key="6">
    <citation type="journal article" date="2002" name="EMBO Rep.">
        <title>COP9 signalosome components play a role in the mating pheromone response of S. cerevisiae.</title>
        <authorList>
            <person name="Maytal-Kivity V."/>
            <person name="Piran R."/>
            <person name="Pick E."/>
            <person name="Hofmann K."/>
            <person name="Glickman M.H."/>
        </authorList>
    </citation>
    <scope>FUNCTION OF THE COP9 SIGNALOSOME COMPLEX</scope>
</reference>
<reference key="7">
    <citation type="journal article" date="2002" name="Nature">
        <title>Functional organization of the yeast proteome by systematic analysis of protein complexes.</title>
        <authorList>
            <person name="Gavin A.-C."/>
            <person name="Boesche M."/>
            <person name="Krause R."/>
            <person name="Grandi P."/>
            <person name="Marzioch M."/>
            <person name="Bauer A."/>
            <person name="Schultz J."/>
            <person name="Rick J.M."/>
            <person name="Michon A.-M."/>
            <person name="Cruciat C.-M."/>
            <person name="Remor M."/>
            <person name="Hoefert C."/>
            <person name="Schelder M."/>
            <person name="Brajenovic M."/>
            <person name="Ruffner H."/>
            <person name="Merino A."/>
            <person name="Klein K."/>
            <person name="Hudak M."/>
            <person name="Dickson D."/>
            <person name="Rudi T."/>
            <person name="Gnau V."/>
            <person name="Bauch A."/>
            <person name="Bastuck S."/>
            <person name="Huhse B."/>
            <person name="Leutwein C."/>
            <person name="Heurtier M.-A."/>
            <person name="Copley R.R."/>
            <person name="Edelmann A."/>
            <person name="Querfurth E."/>
            <person name="Rybin V."/>
            <person name="Drewes G."/>
            <person name="Raida M."/>
            <person name="Bouwmeester T."/>
            <person name="Bork P."/>
            <person name="Seraphin B."/>
            <person name="Kuster B."/>
            <person name="Neubauer G."/>
            <person name="Superti-Furga G."/>
        </authorList>
    </citation>
    <scope>INTERACTION WITH RRI1/CSN5</scope>
    <scope>IDENTIFICATION BY MASS SPECTROMETRY</scope>
</reference>
<reference key="8">
    <citation type="journal article" date="2003" name="Nature">
        <title>Global analysis of protein localization in budding yeast.</title>
        <authorList>
            <person name="Huh W.-K."/>
            <person name="Falvo J.V."/>
            <person name="Gerke L.C."/>
            <person name="Carroll A.S."/>
            <person name="Howson R.W."/>
            <person name="Weissman J.S."/>
            <person name="O'Shea E.K."/>
        </authorList>
    </citation>
    <scope>SUBCELLULAR LOCATION [LARGE SCALE ANALYSIS]</scope>
</reference>
<reference key="9">
    <citation type="journal article" date="2003" name="Nature">
        <title>Global analysis of protein expression in yeast.</title>
        <authorList>
            <person name="Ghaemmaghami S."/>
            <person name="Huh W.-K."/>
            <person name="Bower K."/>
            <person name="Howson R.W."/>
            <person name="Belle A."/>
            <person name="Dephoure N."/>
            <person name="O'Shea E.K."/>
            <person name="Weissman J.S."/>
        </authorList>
    </citation>
    <scope>LEVEL OF PROTEIN EXPRESSION [LARGE SCALE ANALYSIS]</scope>
</reference>